<keyword id="KW-0479">Metal-binding</keyword>
<keyword id="KW-1185">Reference proteome</keyword>
<keyword id="KW-0862">Zinc</keyword>
<protein>
    <recommendedName>
        <fullName>MOB kinase activator-like 3</fullName>
    </recommendedName>
    <alternativeName>
        <fullName>Mob as tumor suppressor protein 3</fullName>
        <shortName>Dmob3</shortName>
    </alternativeName>
    <alternativeName>
        <fullName>Mps one binder kinase activator-like 3</fullName>
    </alternativeName>
</protein>
<accession>Q9VL13</accession>
<reference evidence="5" key="1">
    <citation type="journal article" date="2000" name="Science">
        <title>The genome sequence of Drosophila melanogaster.</title>
        <authorList>
            <person name="Adams M.D."/>
            <person name="Celniker S.E."/>
            <person name="Holt R.A."/>
            <person name="Evans C.A."/>
            <person name="Gocayne J.D."/>
            <person name="Amanatides P.G."/>
            <person name="Scherer S.E."/>
            <person name="Li P.W."/>
            <person name="Hoskins R.A."/>
            <person name="Galle R.F."/>
            <person name="George R.A."/>
            <person name="Lewis S.E."/>
            <person name="Richards S."/>
            <person name="Ashburner M."/>
            <person name="Henderson S.N."/>
            <person name="Sutton G.G."/>
            <person name="Wortman J.R."/>
            <person name="Yandell M.D."/>
            <person name="Zhang Q."/>
            <person name="Chen L.X."/>
            <person name="Brandon R.C."/>
            <person name="Rogers Y.-H.C."/>
            <person name="Blazej R.G."/>
            <person name="Champe M."/>
            <person name="Pfeiffer B.D."/>
            <person name="Wan K.H."/>
            <person name="Doyle C."/>
            <person name="Baxter E.G."/>
            <person name="Helt G."/>
            <person name="Nelson C.R."/>
            <person name="Miklos G.L.G."/>
            <person name="Abril J.F."/>
            <person name="Agbayani A."/>
            <person name="An H.-J."/>
            <person name="Andrews-Pfannkoch C."/>
            <person name="Baldwin D."/>
            <person name="Ballew R.M."/>
            <person name="Basu A."/>
            <person name="Baxendale J."/>
            <person name="Bayraktaroglu L."/>
            <person name="Beasley E.M."/>
            <person name="Beeson K.Y."/>
            <person name="Benos P.V."/>
            <person name="Berman B.P."/>
            <person name="Bhandari D."/>
            <person name="Bolshakov S."/>
            <person name="Borkova D."/>
            <person name="Botchan M.R."/>
            <person name="Bouck J."/>
            <person name="Brokstein P."/>
            <person name="Brottier P."/>
            <person name="Burtis K.C."/>
            <person name="Busam D.A."/>
            <person name="Butler H."/>
            <person name="Cadieu E."/>
            <person name="Center A."/>
            <person name="Chandra I."/>
            <person name="Cherry J.M."/>
            <person name="Cawley S."/>
            <person name="Dahlke C."/>
            <person name="Davenport L.B."/>
            <person name="Davies P."/>
            <person name="de Pablos B."/>
            <person name="Delcher A."/>
            <person name="Deng Z."/>
            <person name="Mays A.D."/>
            <person name="Dew I."/>
            <person name="Dietz S.M."/>
            <person name="Dodson K."/>
            <person name="Doup L.E."/>
            <person name="Downes M."/>
            <person name="Dugan-Rocha S."/>
            <person name="Dunkov B.C."/>
            <person name="Dunn P."/>
            <person name="Durbin K.J."/>
            <person name="Evangelista C.C."/>
            <person name="Ferraz C."/>
            <person name="Ferriera S."/>
            <person name="Fleischmann W."/>
            <person name="Fosler C."/>
            <person name="Gabrielian A.E."/>
            <person name="Garg N.S."/>
            <person name="Gelbart W.M."/>
            <person name="Glasser K."/>
            <person name="Glodek A."/>
            <person name="Gong F."/>
            <person name="Gorrell J.H."/>
            <person name="Gu Z."/>
            <person name="Guan P."/>
            <person name="Harris M."/>
            <person name="Harris N.L."/>
            <person name="Harvey D.A."/>
            <person name="Heiman T.J."/>
            <person name="Hernandez J.R."/>
            <person name="Houck J."/>
            <person name="Hostin D."/>
            <person name="Houston K.A."/>
            <person name="Howland T.J."/>
            <person name="Wei M.-H."/>
            <person name="Ibegwam C."/>
            <person name="Jalali M."/>
            <person name="Kalush F."/>
            <person name="Karpen G.H."/>
            <person name="Ke Z."/>
            <person name="Kennison J.A."/>
            <person name="Ketchum K.A."/>
            <person name="Kimmel B.E."/>
            <person name="Kodira C.D."/>
            <person name="Kraft C.L."/>
            <person name="Kravitz S."/>
            <person name="Kulp D."/>
            <person name="Lai Z."/>
            <person name="Lasko P."/>
            <person name="Lei Y."/>
            <person name="Levitsky A.A."/>
            <person name="Li J.H."/>
            <person name="Li Z."/>
            <person name="Liang Y."/>
            <person name="Lin X."/>
            <person name="Liu X."/>
            <person name="Mattei B."/>
            <person name="McIntosh T.C."/>
            <person name="McLeod M.P."/>
            <person name="McPherson D."/>
            <person name="Merkulov G."/>
            <person name="Milshina N.V."/>
            <person name="Mobarry C."/>
            <person name="Morris J."/>
            <person name="Moshrefi A."/>
            <person name="Mount S.M."/>
            <person name="Moy M."/>
            <person name="Murphy B."/>
            <person name="Murphy L."/>
            <person name="Muzny D.M."/>
            <person name="Nelson D.L."/>
            <person name="Nelson D.R."/>
            <person name="Nelson K.A."/>
            <person name="Nixon K."/>
            <person name="Nusskern D.R."/>
            <person name="Pacleb J.M."/>
            <person name="Palazzolo M."/>
            <person name="Pittman G.S."/>
            <person name="Pan S."/>
            <person name="Pollard J."/>
            <person name="Puri V."/>
            <person name="Reese M.G."/>
            <person name="Reinert K."/>
            <person name="Remington K."/>
            <person name="Saunders R.D.C."/>
            <person name="Scheeler F."/>
            <person name="Shen H."/>
            <person name="Shue B.C."/>
            <person name="Siden-Kiamos I."/>
            <person name="Simpson M."/>
            <person name="Skupski M.P."/>
            <person name="Smith T.J."/>
            <person name="Spier E."/>
            <person name="Spradling A.C."/>
            <person name="Stapleton M."/>
            <person name="Strong R."/>
            <person name="Sun E."/>
            <person name="Svirskas R."/>
            <person name="Tector C."/>
            <person name="Turner R."/>
            <person name="Venter E."/>
            <person name="Wang A.H."/>
            <person name="Wang X."/>
            <person name="Wang Z.-Y."/>
            <person name="Wassarman D.A."/>
            <person name="Weinstock G.M."/>
            <person name="Weissenbach J."/>
            <person name="Williams S.M."/>
            <person name="Woodage T."/>
            <person name="Worley K.C."/>
            <person name="Wu D."/>
            <person name="Yang S."/>
            <person name="Yao Q.A."/>
            <person name="Ye J."/>
            <person name="Yeh R.-F."/>
            <person name="Zaveri J.S."/>
            <person name="Zhan M."/>
            <person name="Zhang G."/>
            <person name="Zhao Q."/>
            <person name="Zheng L."/>
            <person name="Zheng X.H."/>
            <person name="Zhong F.N."/>
            <person name="Zhong W."/>
            <person name="Zhou X."/>
            <person name="Zhu S.C."/>
            <person name="Zhu X."/>
            <person name="Smith H.O."/>
            <person name="Gibbs R.A."/>
            <person name="Myers E.W."/>
            <person name="Rubin G.M."/>
            <person name="Venter J.C."/>
        </authorList>
    </citation>
    <scope>NUCLEOTIDE SEQUENCE [LARGE SCALE GENOMIC DNA]</scope>
    <source>
        <strain evidence="3">Berkeley</strain>
    </source>
</reference>
<reference evidence="4 5" key="2">
    <citation type="journal article" date="2002" name="Genome Biol.">
        <title>Annotation of the Drosophila melanogaster euchromatic genome: a systematic review.</title>
        <authorList>
            <person name="Misra S."/>
            <person name="Crosby M.A."/>
            <person name="Mungall C.J."/>
            <person name="Matthews B.B."/>
            <person name="Campbell K.S."/>
            <person name="Hradecky P."/>
            <person name="Huang Y."/>
            <person name="Kaminker J.S."/>
            <person name="Millburn G.H."/>
            <person name="Prochnik S.E."/>
            <person name="Smith C.D."/>
            <person name="Tupy J.L."/>
            <person name="Whitfield E.J."/>
            <person name="Bayraktaroglu L."/>
            <person name="Berman B.P."/>
            <person name="Bettencourt B.R."/>
            <person name="Celniker S.E."/>
            <person name="de Grey A.D.N.J."/>
            <person name="Drysdale R.A."/>
            <person name="Harris N.L."/>
            <person name="Richter J."/>
            <person name="Russo S."/>
            <person name="Schroeder A.J."/>
            <person name="Shu S.Q."/>
            <person name="Stapleton M."/>
            <person name="Yamada C."/>
            <person name="Ashburner M."/>
            <person name="Gelbart W.M."/>
            <person name="Rubin G.M."/>
            <person name="Lewis S.E."/>
        </authorList>
    </citation>
    <scope>GENOME REANNOTATION</scope>
    <source>
        <strain>Berkeley</strain>
    </source>
</reference>
<reference evidence="6" key="3">
    <citation type="submission" date="2003-02" db="EMBL/GenBank/DDBJ databases">
        <authorList>
            <person name="Stapleton M."/>
            <person name="Brokstein P."/>
            <person name="Hong L."/>
            <person name="Agbayani A."/>
            <person name="Carlson J.W."/>
            <person name="Champe M."/>
            <person name="Chavez C."/>
            <person name="Dorsett V."/>
            <person name="Dresnek D."/>
            <person name="Farfan D."/>
            <person name="Frise E."/>
            <person name="George R.A."/>
            <person name="Gonzalez M."/>
            <person name="Guarin H."/>
            <person name="Kronmiller B."/>
            <person name="Li P.W."/>
            <person name="Liao G."/>
            <person name="Miranda A."/>
            <person name="Mungall C.J."/>
            <person name="Nunoo J."/>
            <person name="Pacleb J.M."/>
            <person name="Paragas V."/>
            <person name="Park S."/>
            <person name="Patel S."/>
            <person name="Phouanenavong S."/>
            <person name="Wan K.H."/>
            <person name="Yu C."/>
            <person name="Lewis S.E."/>
            <person name="Rubin G.M."/>
            <person name="Celniker S.E."/>
        </authorList>
    </citation>
    <scope>NUCLEOTIDE SEQUENCE [LARGE SCALE MRNA]</scope>
    <source>
        <strain evidence="6">Berkeley</strain>
        <tissue>Embryo</tissue>
    </source>
</reference>
<reference evidence="4" key="4">
    <citation type="journal article" date="2005" name="Mol. Biol. Cell">
        <title>Drosophila Mob family proteins interact with the related tricornered (Trc) and warts (Wts) kinases.</title>
        <authorList>
            <person name="He Y."/>
            <person name="Emoto K."/>
            <person name="Fang X."/>
            <person name="Ren N."/>
            <person name="Tian X."/>
            <person name="Jan Y.-N."/>
            <person name="Adler P.N."/>
        </authorList>
    </citation>
    <scope>IDENTIFICATION</scope>
</reference>
<organism>
    <name type="scientific">Drosophila melanogaster</name>
    <name type="common">Fruit fly</name>
    <dbReference type="NCBI Taxonomy" id="7227"/>
    <lineage>
        <taxon>Eukaryota</taxon>
        <taxon>Metazoa</taxon>
        <taxon>Ecdysozoa</taxon>
        <taxon>Arthropoda</taxon>
        <taxon>Hexapoda</taxon>
        <taxon>Insecta</taxon>
        <taxon>Pterygota</taxon>
        <taxon>Neoptera</taxon>
        <taxon>Endopterygota</taxon>
        <taxon>Diptera</taxon>
        <taxon>Brachycera</taxon>
        <taxon>Muscomorpha</taxon>
        <taxon>Ephydroidea</taxon>
        <taxon>Drosophilidae</taxon>
        <taxon>Drosophila</taxon>
        <taxon>Sophophora</taxon>
    </lineage>
</organism>
<proteinExistence type="evidence at transcript level"/>
<evidence type="ECO:0000250" key="1">
    <source>
        <dbReference type="UniProtKB" id="Q9H8S9"/>
    </source>
</evidence>
<evidence type="ECO:0000255" key="2"/>
<evidence type="ECO:0000269" key="3">
    <source>
    </source>
</evidence>
<evidence type="ECO:0000305" key="4"/>
<evidence type="ECO:0000312" key="5">
    <source>
        <dbReference type="EMBL" id="AAF52892.1"/>
    </source>
</evidence>
<evidence type="ECO:0000312" key="6">
    <source>
        <dbReference type="EMBL" id="AAL48622.1"/>
    </source>
</evidence>
<gene>
    <name type="primary">Mob3</name>
    <name type="ORF">CG4946</name>
</gene>
<sequence length="220" mass="25546">MALNGFLEFFQKGKTFRPKKPFASGTIRYSLHKQAQASLQSGINLRQVVRLPQGENLNDWLAVHVVDFFNRINLIYGTVSEFCNETTCPTMSGGSRYEYLWADGDLYKKPTALSAQKYIEHLMDWIETQINNEAVFPVSTDVPFPKNFIAISRKILTRLFRVFVHVYIHHFDRIVSIGAEAHVNACYKHFYYFVQEFDMISAKELEPLQEMTSRICKDKD</sequence>
<dbReference type="EMBL" id="AE014134">
    <property type="protein sequence ID" value="AAF52892.1"/>
    <property type="molecule type" value="Genomic_DNA"/>
</dbReference>
<dbReference type="EMBL" id="AY071000">
    <property type="protein sequence ID" value="AAL48622.1"/>
    <property type="molecule type" value="mRNA"/>
</dbReference>
<dbReference type="RefSeq" id="NP_609364.1">
    <property type="nucleotide sequence ID" value="NM_135520.4"/>
</dbReference>
<dbReference type="SMR" id="Q9VL13"/>
<dbReference type="BioGRID" id="60460">
    <property type="interactions" value="1"/>
</dbReference>
<dbReference type="FunCoup" id="Q9VL13">
    <property type="interactions" value="606"/>
</dbReference>
<dbReference type="IntAct" id="Q9VL13">
    <property type="interactions" value="1"/>
</dbReference>
<dbReference type="STRING" id="7227.FBpp0079573"/>
<dbReference type="PaxDb" id="7227-FBpp0079573"/>
<dbReference type="DNASU" id="34372"/>
<dbReference type="EnsemblMetazoa" id="FBtr0079983">
    <property type="protein sequence ID" value="FBpp0079573"/>
    <property type="gene ID" value="FBgn0259482"/>
</dbReference>
<dbReference type="GeneID" id="34372"/>
<dbReference type="KEGG" id="dme:Dmel_CG4946"/>
<dbReference type="UCSC" id="CG4946-RA">
    <property type="organism name" value="d. melanogaster"/>
</dbReference>
<dbReference type="AGR" id="FB:FBgn0259482"/>
<dbReference type="CTD" id="34372"/>
<dbReference type="FlyBase" id="FBgn0259482">
    <property type="gene designation" value="Mob3"/>
</dbReference>
<dbReference type="VEuPathDB" id="VectorBase:FBgn0259482"/>
<dbReference type="eggNOG" id="KOG1903">
    <property type="taxonomic scope" value="Eukaryota"/>
</dbReference>
<dbReference type="GeneTree" id="ENSGT01120000271863"/>
<dbReference type="HOGENOM" id="CLU_038321_3_0_1"/>
<dbReference type="InParanoid" id="Q9VL13"/>
<dbReference type="OMA" id="WIEIRIN"/>
<dbReference type="OrthoDB" id="8170117at2759"/>
<dbReference type="PhylomeDB" id="Q9VL13"/>
<dbReference type="BioGRID-ORCS" id="34372">
    <property type="hits" value="0 hits in 3 CRISPR screens"/>
</dbReference>
<dbReference type="ChiTaRS" id="Mob3">
    <property type="organism name" value="fly"/>
</dbReference>
<dbReference type="GenomeRNAi" id="34372"/>
<dbReference type="PRO" id="PR:Q9VL13"/>
<dbReference type="Proteomes" id="UP000000803">
    <property type="component" value="Chromosome 2L"/>
</dbReference>
<dbReference type="Bgee" id="FBgn0259482">
    <property type="expression patterns" value="Expressed in adult abdomen and 117 other cell types or tissues"/>
</dbReference>
<dbReference type="GO" id="GO:0005737">
    <property type="term" value="C:cytoplasm"/>
    <property type="evidence" value="ECO:0000318"/>
    <property type="project" value="GO_Central"/>
</dbReference>
<dbReference type="GO" id="GO:0005634">
    <property type="term" value="C:nucleus"/>
    <property type="evidence" value="ECO:0000318"/>
    <property type="project" value="GO_Central"/>
</dbReference>
<dbReference type="GO" id="GO:0046872">
    <property type="term" value="F:metal ion binding"/>
    <property type="evidence" value="ECO:0007669"/>
    <property type="project" value="UniProtKB-KW"/>
</dbReference>
<dbReference type="GO" id="GO:0030295">
    <property type="term" value="F:protein kinase activator activity"/>
    <property type="evidence" value="ECO:0000318"/>
    <property type="project" value="GO_Central"/>
</dbReference>
<dbReference type="GO" id="GO:0019901">
    <property type="term" value="F:protein kinase binding"/>
    <property type="evidence" value="ECO:0000250"/>
    <property type="project" value="FlyBase"/>
</dbReference>
<dbReference type="GO" id="GO:0007165">
    <property type="term" value="P:signal transduction"/>
    <property type="evidence" value="ECO:0000318"/>
    <property type="project" value="GO_Central"/>
</dbReference>
<dbReference type="FunFam" id="1.20.140.30:FF:000001">
    <property type="entry name" value="MOB kinase activator 1A"/>
    <property type="match status" value="1"/>
</dbReference>
<dbReference type="Gene3D" id="1.20.140.30">
    <property type="entry name" value="MOB kinase activator"/>
    <property type="match status" value="1"/>
</dbReference>
<dbReference type="InterPro" id="IPR005301">
    <property type="entry name" value="MOB_kinase_act_fam"/>
</dbReference>
<dbReference type="InterPro" id="IPR036703">
    <property type="entry name" value="MOB_kinase_act_sf"/>
</dbReference>
<dbReference type="PANTHER" id="PTHR22599">
    <property type="entry name" value="MPS ONE BINDER KINASE ACTIVATOR-LIKE MOB"/>
    <property type="match status" value="1"/>
</dbReference>
<dbReference type="Pfam" id="PF03637">
    <property type="entry name" value="Mob1_phocein"/>
    <property type="match status" value="1"/>
</dbReference>
<dbReference type="SMART" id="SM01388">
    <property type="entry name" value="Mob1_phocein"/>
    <property type="match status" value="1"/>
</dbReference>
<dbReference type="SUPFAM" id="SSF101152">
    <property type="entry name" value="Mob1/phocein"/>
    <property type="match status" value="1"/>
</dbReference>
<comment type="similarity">
    <text evidence="2">Belongs to the MOB1/phocein family.</text>
</comment>
<name>MOB3_DROME</name>
<feature type="chain" id="PRO_0000279703" description="MOB kinase activator-like 3">
    <location>
        <begin position="1"/>
        <end position="220"/>
    </location>
</feature>
<feature type="binding site" evidence="1">
    <location>
        <position position="83"/>
    </location>
    <ligand>
        <name>Zn(2+)</name>
        <dbReference type="ChEBI" id="CHEBI:29105"/>
    </ligand>
</feature>
<feature type="binding site" evidence="1">
    <location>
        <position position="88"/>
    </location>
    <ligand>
        <name>Zn(2+)</name>
        <dbReference type="ChEBI" id="CHEBI:29105"/>
    </ligand>
</feature>
<feature type="binding site" evidence="1">
    <location>
        <position position="165"/>
    </location>
    <ligand>
        <name>Zn(2+)</name>
        <dbReference type="ChEBI" id="CHEBI:29105"/>
    </ligand>
</feature>
<feature type="binding site" evidence="1">
    <location>
        <position position="170"/>
    </location>
    <ligand>
        <name>Zn(2+)</name>
        <dbReference type="ChEBI" id="CHEBI:29105"/>
    </ligand>
</feature>